<accession>B8CQH4</accession>
<name>THII_SHEPW</name>
<reference key="1">
    <citation type="journal article" date="2008" name="PLoS ONE">
        <title>Environmental adaptation: genomic analysis of the piezotolerant and psychrotolerant deep-sea iron reducing bacterium Shewanella piezotolerans WP3.</title>
        <authorList>
            <person name="Wang F."/>
            <person name="Wang J."/>
            <person name="Jian H."/>
            <person name="Zhang B."/>
            <person name="Li S."/>
            <person name="Wang F."/>
            <person name="Zeng X."/>
            <person name="Gao L."/>
            <person name="Bartlett D.H."/>
            <person name="Yu J."/>
            <person name="Hu S."/>
            <person name="Xiao X."/>
        </authorList>
    </citation>
    <scope>NUCLEOTIDE SEQUENCE [LARGE SCALE GENOMIC DNA]</scope>
    <source>
        <strain>WP3 / JCM 13877</strain>
    </source>
</reference>
<evidence type="ECO:0000255" key="1">
    <source>
        <dbReference type="HAMAP-Rule" id="MF_00021"/>
    </source>
</evidence>
<gene>
    <name evidence="1" type="primary">thiI</name>
    <name type="ordered locus">swp_3614</name>
</gene>
<sequence length="484" mass="54648">MKFIVKLFPEIMMKSKPVRMRFTKMLETNIRNVLKKVDESAKVQRQWDKIMVMVPDDRPDLIEAFGERLACIPGIAHVLQVNVSTFESVDDIYQQTLAVYKDQLAGKTFCVRVKRAGKHDFNSIEVERYVGGGLNQFTEAAGVRLKNPDMTVNLEIDNEQLYLVDKRIQGLGGFPMATQEDVLSLISGGFDSGVSSYQFIKRGSRTHYCFFNLGGDQHEIGVKQVAYHLWQKYGESHKVKFISVPFDPVVQEILERVDNGQMGVVLKRMMMRAAARVADKMGIQALVTGEAMGQVSSQTLTNLNVIDRCTEQLILRPLIAMDKQDIINISREIGTEDFAKSIPEYCGVISQKPTVKAVLSKVEAEEAKFSDDLIDRVIQDAVIIDIKEIATQMDTKITEAETVAAISADEVIIDVRAPEEEEKDPLEIEGIETKTIPFYKLATQFADLDKDKTYLLYCDRGVMSKLQALYLQEQGYSNVKVYRP</sequence>
<feature type="chain" id="PRO_1000116407" description="tRNA sulfurtransferase">
    <location>
        <begin position="1"/>
        <end position="484"/>
    </location>
</feature>
<feature type="domain" description="THUMP" evidence="1">
    <location>
        <begin position="63"/>
        <end position="167"/>
    </location>
</feature>
<feature type="domain" description="Rhodanese" evidence="1">
    <location>
        <begin position="406"/>
        <end position="484"/>
    </location>
</feature>
<feature type="active site" description="Cysteine persulfide intermediate" evidence="1">
    <location>
        <position position="458"/>
    </location>
</feature>
<feature type="binding site" evidence="1">
    <location>
        <begin position="185"/>
        <end position="186"/>
    </location>
    <ligand>
        <name>ATP</name>
        <dbReference type="ChEBI" id="CHEBI:30616"/>
    </ligand>
</feature>
<feature type="binding site" evidence="1">
    <location>
        <position position="267"/>
    </location>
    <ligand>
        <name>ATP</name>
        <dbReference type="ChEBI" id="CHEBI:30616"/>
    </ligand>
</feature>
<feature type="binding site" evidence="1">
    <location>
        <position position="289"/>
    </location>
    <ligand>
        <name>ATP</name>
        <dbReference type="ChEBI" id="CHEBI:30616"/>
    </ligand>
</feature>
<feature type="binding site" evidence="1">
    <location>
        <position position="298"/>
    </location>
    <ligand>
        <name>ATP</name>
        <dbReference type="ChEBI" id="CHEBI:30616"/>
    </ligand>
</feature>
<feature type="disulfide bond" description="Redox-active" evidence="1">
    <location>
        <begin position="346"/>
        <end position="458"/>
    </location>
</feature>
<comment type="function">
    <text evidence="1">Catalyzes the ATP-dependent transfer of a sulfur to tRNA to produce 4-thiouridine in position 8 of tRNAs, which functions as a near-UV photosensor. Also catalyzes the transfer of sulfur to the sulfur carrier protein ThiS, forming ThiS-thiocarboxylate. This is a step in the synthesis of thiazole, in the thiamine biosynthesis pathway. The sulfur is donated as persulfide by IscS.</text>
</comment>
<comment type="catalytic activity">
    <reaction evidence="1">
        <text>[ThiI sulfur-carrier protein]-S-sulfanyl-L-cysteine + a uridine in tRNA + 2 reduced [2Fe-2S]-[ferredoxin] + ATP + H(+) = [ThiI sulfur-carrier protein]-L-cysteine + a 4-thiouridine in tRNA + 2 oxidized [2Fe-2S]-[ferredoxin] + AMP + diphosphate</text>
        <dbReference type="Rhea" id="RHEA:24176"/>
        <dbReference type="Rhea" id="RHEA-COMP:10000"/>
        <dbReference type="Rhea" id="RHEA-COMP:10001"/>
        <dbReference type="Rhea" id="RHEA-COMP:13337"/>
        <dbReference type="Rhea" id="RHEA-COMP:13338"/>
        <dbReference type="Rhea" id="RHEA-COMP:13339"/>
        <dbReference type="Rhea" id="RHEA-COMP:13340"/>
        <dbReference type="ChEBI" id="CHEBI:15378"/>
        <dbReference type="ChEBI" id="CHEBI:29950"/>
        <dbReference type="ChEBI" id="CHEBI:30616"/>
        <dbReference type="ChEBI" id="CHEBI:33019"/>
        <dbReference type="ChEBI" id="CHEBI:33737"/>
        <dbReference type="ChEBI" id="CHEBI:33738"/>
        <dbReference type="ChEBI" id="CHEBI:61963"/>
        <dbReference type="ChEBI" id="CHEBI:65315"/>
        <dbReference type="ChEBI" id="CHEBI:136798"/>
        <dbReference type="ChEBI" id="CHEBI:456215"/>
        <dbReference type="EC" id="2.8.1.4"/>
    </reaction>
</comment>
<comment type="catalytic activity">
    <reaction evidence="1">
        <text>[ThiS sulfur-carrier protein]-C-terminal Gly-Gly-AMP + S-sulfanyl-L-cysteinyl-[cysteine desulfurase] + AH2 = [ThiS sulfur-carrier protein]-C-terminal-Gly-aminoethanethioate + L-cysteinyl-[cysteine desulfurase] + A + AMP + 2 H(+)</text>
        <dbReference type="Rhea" id="RHEA:43340"/>
        <dbReference type="Rhea" id="RHEA-COMP:12157"/>
        <dbReference type="Rhea" id="RHEA-COMP:12158"/>
        <dbReference type="Rhea" id="RHEA-COMP:12910"/>
        <dbReference type="Rhea" id="RHEA-COMP:19908"/>
        <dbReference type="ChEBI" id="CHEBI:13193"/>
        <dbReference type="ChEBI" id="CHEBI:15378"/>
        <dbReference type="ChEBI" id="CHEBI:17499"/>
        <dbReference type="ChEBI" id="CHEBI:29950"/>
        <dbReference type="ChEBI" id="CHEBI:61963"/>
        <dbReference type="ChEBI" id="CHEBI:90618"/>
        <dbReference type="ChEBI" id="CHEBI:232372"/>
        <dbReference type="ChEBI" id="CHEBI:456215"/>
    </reaction>
</comment>
<comment type="pathway">
    <text evidence="1">Cofactor biosynthesis; thiamine diphosphate biosynthesis.</text>
</comment>
<comment type="subcellular location">
    <subcellularLocation>
        <location evidence="1">Cytoplasm</location>
    </subcellularLocation>
</comment>
<comment type="similarity">
    <text evidence="1">Belongs to the ThiI family.</text>
</comment>
<keyword id="KW-0067">ATP-binding</keyword>
<keyword id="KW-0963">Cytoplasm</keyword>
<keyword id="KW-1015">Disulfide bond</keyword>
<keyword id="KW-0547">Nucleotide-binding</keyword>
<keyword id="KW-0676">Redox-active center</keyword>
<keyword id="KW-0694">RNA-binding</keyword>
<keyword id="KW-0784">Thiamine biosynthesis</keyword>
<keyword id="KW-0808">Transferase</keyword>
<keyword id="KW-0820">tRNA-binding</keyword>
<dbReference type="EC" id="2.8.1.4" evidence="1"/>
<dbReference type="EMBL" id="CP000472">
    <property type="protein sequence ID" value="ACJ30304.1"/>
    <property type="molecule type" value="Genomic_DNA"/>
</dbReference>
<dbReference type="RefSeq" id="WP_020913650.1">
    <property type="nucleotide sequence ID" value="NC_011566.1"/>
</dbReference>
<dbReference type="SMR" id="B8CQH4"/>
<dbReference type="STRING" id="225849.swp_3614"/>
<dbReference type="KEGG" id="swp:swp_3614"/>
<dbReference type="eggNOG" id="COG0301">
    <property type="taxonomic scope" value="Bacteria"/>
</dbReference>
<dbReference type="eggNOG" id="COG0607">
    <property type="taxonomic scope" value="Bacteria"/>
</dbReference>
<dbReference type="HOGENOM" id="CLU_037952_4_1_6"/>
<dbReference type="OrthoDB" id="9773948at2"/>
<dbReference type="UniPathway" id="UPA00060"/>
<dbReference type="Proteomes" id="UP000000753">
    <property type="component" value="Chromosome"/>
</dbReference>
<dbReference type="GO" id="GO:0005829">
    <property type="term" value="C:cytosol"/>
    <property type="evidence" value="ECO:0007669"/>
    <property type="project" value="TreeGrafter"/>
</dbReference>
<dbReference type="GO" id="GO:0005524">
    <property type="term" value="F:ATP binding"/>
    <property type="evidence" value="ECO:0007669"/>
    <property type="project" value="UniProtKB-UniRule"/>
</dbReference>
<dbReference type="GO" id="GO:0004810">
    <property type="term" value="F:CCA tRNA nucleotidyltransferase activity"/>
    <property type="evidence" value="ECO:0007669"/>
    <property type="project" value="InterPro"/>
</dbReference>
<dbReference type="GO" id="GO:0000049">
    <property type="term" value="F:tRNA binding"/>
    <property type="evidence" value="ECO:0007669"/>
    <property type="project" value="UniProtKB-UniRule"/>
</dbReference>
<dbReference type="GO" id="GO:0140741">
    <property type="term" value="F:tRNA-uracil-4 sulfurtransferase activity"/>
    <property type="evidence" value="ECO:0007669"/>
    <property type="project" value="UniProtKB-EC"/>
</dbReference>
<dbReference type="GO" id="GO:0009228">
    <property type="term" value="P:thiamine biosynthetic process"/>
    <property type="evidence" value="ECO:0007669"/>
    <property type="project" value="UniProtKB-KW"/>
</dbReference>
<dbReference type="GO" id="GO:0009229">
    <property type="term" value="P:thiamine diphosphate biosynthetic process"/>
    <property type="evidence" value="ECO:0007669"/>
    <property type="project" value="UniProtKB-UniRule"/>
</dbReference>
<dbReference type="GO" id="GO:0052837">
    <property type="term" value="P:thiazole biosynthetic process"/>
    <property type="evidence" value="ECO:0007669"/>
    <property type="project" value="InterPro"/>
</dbReference>
<dbReference type="GO" id="GO:0002937">
    <property type="term" value="P:tRNA 4-thiouridine biosynthesis"/>
    <property type="evidence" value="ECO:0007669"/>
    <property type="project" value="TreeGrafter"/>
</dbReference>
<dbReference type="CDD" id="cd01712">
    <property type="entry name" value="PPase_ThiI"/>
    <property type="match status" value="1"/>
</dbReference>
<dbReference type="CDD" id="cd00158">
    <property type="entry name" value="RHOD"/>
    <property type="match status" value="1"/>
</dbReference>
<dbReference type="CDD" id="cd11716">
    <property type="entry name" value="THUMP_ThiI"/>
    <property type="match status" value="1"/>
</dbReference>
<dbReference type="FunFam" id="3.30.2130.30:FF:000002">
    <property type="entry name" value="tRNA sulfurtransferase"/>
    <property type="match status" value="1"/>
</dbReference>
<dbReference type="FunFam" id="3.40.50.620:FF:000029">
    <property type="entry name" value="tRNA sulfurtransferase"/>
    <property type="match status" value="1"/>
</dbReference>
<dbReference type="Gene3D" id="3.30.2130.30">
    <property type="match status" value="1"/>
</dbReference>
<dbReference type="Gene3D" id="3.40.50.620">
    <property type="entry name" value="HUPs"/>
    <property type="match status" value="1"/>
</dbReference>
<dbReference type="Gene3D" id="3.40.250.10">
    <property type="entry name" value="Rhodanese-like domain"/>
    <property type="match status" value="1"/>
</dbReference>
<dbReference type="HAMAP" id="MF_00021">
    <property type="entry name" value="ThiI"/>
    <property type="match status" value="1"/>
</dbReference>
<dbReference type="InterPro" id="IPR001763">
    <property type="entry name" value="Rhodanese-like_dom"/>
</dbReference>
<dbReference type="InterPro" id="IPR036873">
    <property type="entry name" value="Rhodanese-like_dom_sf"/>
</dbReference>
<dbReference type="InterPro" id="IPR014729">
    <property type="entry name" value="Rossmann-like_a/b/a_fold"/>
</dbReference>
<dbReference type="InterPro" id="IPR020536">
    <property type="entry name" value="ThiI_AANH"/>
</dbReference>
<dbReference type="InterPro" id="IPR054173">
    <property type="entry name" value="ThiI_fer"/>
</dbReference>
<dbReference type="InterPro" id="IPR049961">
    <property type="entry name" value="ThiI_N"/>
</dbReference>
<dbReference type="InterPro" id="IPR026340">
    <property type="entry name" value="THII_Thiazole_biosynth_dom"/>
</dbReference>
<dbReference type="InterPro" id="IPR004114">
    <property type="entry name" value="THUMP_dom"/>
</dbReference>
<dbReference type="InterPro" id="IPR049962">
    <property type="entry name" value="THUMP_ThiI"/>
</dbReference>
<dbReference type="InterPro" id="IPR003720">
    <property type="entry name" value="tRNA_STrfase"/>
</dbReference>
<dbReference type="InterPro" id="IPR050102">
    <property type="entry name" value="tRNA_sulfurtransferase_ThiI"/>
</dbReference>
<dbReference type="NCBIfam" id="TIGR04271">
    <property type="entry name" value="ThiI_C_thiazole"/>
    <property type="match status" value="1"/>
</dbReference>
<dbReference type="NCBIfam" id="TIGR00342">
    <property type="entry name" value="tRNA uracil 4-sulfurtransferase ThiI"/>
    <property type="match status" value="1"/>
</dbReference>
<dbReference type="PANTHER" id="PTHR43209">
    <property type="entry name" value="TRNA SULFURTRANSFERASE"/>
    <property type="match status" value="1"/>
</dbReference>
<dbReference type="PANTHER" id="PTHR43209:SF1">
    <property type="entry name" value="TRNA SULFURTRANSFERASE"/>
    <property type="match status" value="1"/>
</dbReference>
<dbReference type="Pfam" id="PF00581">
    <property type="entry name" value="Rhodanese"/>
    <property type="match status" value="1"/>
</dbReference>
<dbReference type="Pfam" id="PF02568">
    <property type="entry name" value="ThiI"/>
    <property type="match status" value="1"/>
</dbReference>
<dbReference type="Pfam" id="PF22025">
    <property type="entry name" value="ThiI_fer"/>
    <property type="match status" value="1"/>
</dbReference>
<dbReference type="Pfam" id="PF02926">
    <property type="entry name" value="THUMP"/>
    <property type="match status" value="1"/>
</dbReference>
<dbReference type="SMART" id="SM00981">
    <property type="entry name" value="THUMP"/>
    <property type="match status" value="1"/>
</dbReference>
<dbReference type="SUPFAM" id="SSF52402">
    <property type="entry name" value="Adenine nucleotide alpha hydrolases-like"/>
    <property type="match status" value="1"/>
</dbReference>
<dbReference type="SUPFAM" id="SSF52821">
    <property type="entry name" value="Rhodanese/Cell cycle control phosphatase"/>
    <property type="match status" value="1"/>
</dbReference>
<dbReference type="SUPFAM" id="SSF143437">
    <property type="entry name" value="THUMP domain-like"/>
    <property type="match status" value="1"/>
</dbReference>
<dbReference type="PROSITE" id="PS50206">
    <property type="entry name" value="RHODANESE_3"/>
    <property type="match status" value="1"/>
</dbReference>
<dbReference type="PROSITE" id="PS51165">
    <property type="entry name" value="THUMP"/>
    <property type="match status" value="1"/>
</dbReference>
<proteinExistence type="inferred from homology"/>
<protein>
    <recommendedName>
        <fullName evidence="1">tRNA sulfurtransferase</fullName>
        <ecNumber evidence="1">2.8.1.4</ecNumber>
    </recommendedName>
    <alternativeName>
        <fullName evidence="1">Sulfur carrier protein ThiS sulfurtransferase</fullName>
    </alternativeName>
    <alternativeName>
        <fullName evidence="1">Thiamine biosynthesis protein ThiI</fullName>
    </alternativeName>
    <alternativeName>
        <fullName evidence="1">tRNA 4-thiouridine synthase</fullName>
    </alternativeName>
</protein>
<organism>
    <name type="scientific">Shewanella piezotolerans (strain WP3 / JCM 13877)</name>
    <dbReference type="NCBI Taxonomy" id="225849"/>
    <lineage>
        <taxon>Bacteria</taxon>
        <taxon>Pseudomonadati</taxon>
        <taxon>Pseudomonadota</taxon>
        <taxon>Gammaproteobacteria</taxon>
        <taxon>Alteromonadales</taxon>
        <taxon>Shewanellaceae</taxon>
        <taxon>Shewanella</taxon>
    </lineage>
</organism>